<proteinExistence type="inferred from homology"/>
<sequence length="137" mass="15540">MSEALKILNNIRTLRAQARECTLETLEEMLEKLEVVVNERREEESAAAAEVEERTRKLQQYREMLIADGIDPNELLNSLAAVKSGTKAKRAQRPAKYSYVDENGETKTWTGQGRTPAVIKKAMDEQGKSLDDFLIKQ</sequence>
<comment type="function">
    <text evidence="3">A DNA-binding protein implicated in transcriptional repression and chromosome organization and compaction. Binds nucleation sites in AT-rich DNA and bridges them, forming higher-order nucleoprotein complexes and condensing the chromosome. As many horizontally transferred genes are AT-rich, it plays a central role in silencing foreign genes. A subset of genes are repressed by H-NS in association with other proteins (By similarity).</text>
</comment>
<comment type="subunit">
    <text evidence="3">Homodimer that oligomerizes on DNA into higher-order complexes that form bridges between disparate regions of DNA compacting it. Interacts with Hha, Cnu and StpA.</text>
</comment>
<comment type="subcellular location">
    <subcellularLocation>
        <location evidence="3">Cytoplasm</location>
        <location evidence="3">Nucleoid</location>
    </subcellularLocation>
</comment>
<comment type="similarity">
    <text evidence="4">Belongs to the histone-like protein H-NS family.</text>
</comment>
<accession>P0ACF9</accession>
<accession>P08936</accession>
<organism>
    <name type="scientific">Escherichia coli O6:H1 (strain CFT073 / ATCC 700928 / UPEC)</name>
    <dbReference type="NCBI Taxonomy" id="199310"/>
    <lineage>
        <taxon>Bacteria</taxon>
        <taxon>Pseudomonadati</taxon>
        <taxon>Pseudomonadota</taxon>
        <taxon>Gammaproteobacteria</taxon>
        <taxon>Enterobacterales</taxon>
        <taxon>Enterobacteriaceae</taxon>
        <taxon>Escherichia</taxon>
    </lineage>
</organism>
<keyword id="KW-0963">Cytoplasm</keyword>
<keyword id="KW-0238">DNA-binding</keyword>
<keyword id="KW-1185">Reference proteome</keyword>
<keyword id="KW-0678">Repressor</keyword>
<keyword id="KW-0804">Transcription</keyword>
<keyword id="KW-0805">Transcription regulation</keyword>
<protein>
    <recommendedName>
        <fullName>DNA-binding protein H-NS</fullName>
    </recommendedName>
    <alternativeName>
        <fullName>Histone-like protein HLP-II</fullName>
    </alternativeName>
    <alternativeName>
        <fullName>Protein B1</fullName>
    </alternativeName>
    <alternativeName>
        <fullName>Protein H1</fullName>
    </alternativeName>
</protein>
<dbReference type="EMBL" id="AE014075">
    <property type="protein sequence ID" value="AAN80168.1"/>
    <property type="molecule type" value="Genomic_DNA"/>
</dbReference>
<dbReference type="RefSeq" id="WP_001287378.1">
    <property type="nucleotide sequence ID" value="NZ_CP051263.1"/>
</dbReference>
<dbReference type="BMRB" id="P0ACF9"/>
<dbReference type="SMR" id="P0ACF9"/>
<dbReference type="STRING" id="199310.c1701"/>
<dbReference type="GeneID" id="93775303"/>
<dbReference type="KEGG" id="ecc:c1701"/>
<dbReference type="eggNOG" id="COG2916">
    <property type="taxonomic scope" value="Bacteria"/>
</dbReference>
<dbReference type="HOGENOM" id="CLU_117503_0_0_6"/>
<dbReference type="BioCyc" id="ECOL199310:C1701-MONOMER"/>
<dbReference type="Proteomes" id="UP000001410">
    <property type="component" value="Chromosome"/>
</dbReference>
<dbReference type="GO" id="GO:0005829">
    <property type="term" value="C:cytosol"/>
    <property type="evidence" value="ECO:0007669"/>
    <property type="project" value="TreeGrafter"/>
</dbReference>
<dbReference type="GO" id="GO:0009295">
    <property type="term" value="C:nucleoid"/>
    <property type="evidence" value="ECO:0007669"/>
    <property type="project" value="UniProtKB-SubCell"/>
</dbReference>
<dbReference type="GO" id="GO:0032993">
    <property type="term" value="C:protein-DNA complex"/>
    <property type="evidence" value="ECO:0007669"/>
    <property type="project" value="TreeGrafter"/>
</dbReference>
<dbReference type="GO" id="GO:0003681">
    <property type="term" value="F:bent DNA binding"/>
    <property type="evidence" value="ECO:0007669"/>
    <property type="project" value="TreeGrafter"/>
</dbReference>
<dbReference type="GO" id="GO:0001217">
    <property type="term" value="F:DNA-binding transcription repressor activity"/>
    <property type="evidence" value="ECO:0007669"/>
    <property type="project" value="TreeGrafter"/>
</dbReference>
<dbReference type="GO" id="GO:0003680">
    <property type="term" value="F:minor groove of adenine-thymine-rich DNA binding"/>
    <property type="evidence" value="ECO:0007669"/>
    <property type="project" value="TreeGrafter"/>
</dbReference>
<dbReference type="GO" id="GO:0046983">
    <property type="term" value="F:protein dimerization activity"/>
    <property type="evidence" value="ECO:0007669"/>
    <property type="project" value="InterPro"/>
</dbReference>
<dbReference type="GO" id="GO:0030527">
    <property type="term" value="F:structural constituent of chromatin"/>
    <property type="evidence" value="ECO:0007669"/>
    <property type="project" value="InterPro"/>
</dbReference>
<dbReference type="GO" id="GO:0000976">
    <property type="term" value="F:transcription cis-regulatory region binding"/>
    <property type="evidence" value="ECO:0007669"/>
    <property type="project" value="TreeGrafter"/>
</dbReference>
<dbReference type="FunFam" id="1.10.287.1050:FF:000001">
    <property type="entry name" value="DNA-binding protein"/>
    <property type="match status" value="1"/>
</dbReference>
<dbReference type="FunFam" id="4.10.430.10:FF:000001">
    <property type="entry name" value="DNA-binding protein"/>
    <property type="match status" value="1"/>
</dbReference>
<dbReference type="Gene3D" id="1.10.287.1050">
    <property type="entry name" value="H-NS histone-like proteins"/>
    <property type="match status" value="1"/>
</dbReference>
<dbReference type="Gene3D" id="4.10.430.10">
    <property type="entry name" value="Histone-like protein H-NS, C-terminal domain"/>
    <property type="match status" value="1"/>
</dbReference>
<dbReference type="InterPro" id="IPR054180">
    <property type="entry name" value="H-NS-like_N"/>
</dbReference>
<dbReference type="InterPro" id="IPR027444">
    <property type="entry name" value="H-NS_C_dom"/>
</dbReference>
<dbReference type="InterPro" id="IPR037150">
    <property type="entry name" value="H-NS_C_dom_sf"/>
</dbReference>
<dbReference type="InterPro" id="IPR001801">
    <property type="entry name" value="Histone_HNS"/>
</dbReference>
<dbReference type="InterPro" id="IPR027454">
    <property type="entry name" value="Histone_HNS_N"/>
</dbReference>
<dbReference type="NCBIfam" id="NF008193">
    <property type="entry name" value="PRK10947.1"/>
    <property type="match status" value="1"/>
</dbReference>
<dbReference type="PANTHER" id="PTHR38097">
    <property type="match status" value="1"/>
</dbReference>
<dbReference type="PANTHER" id="PTHR38097:SF1">
    <property type="entry name" value="DNA-BINDING PROTEIN H-NS"/>
    <property type="match status" value="1"/>
</dbReference>
<dbReference type="Pfam" id="PF00816">
    <property type="entry name" value="Histone_HNS"/>
    <property type="match status" value="1"/>
</dbReference>
<dbReference type="Pfam" id="PF22470">
    <property type="entry name" value="Histone_HNS_N"/>
    <property type="match status" value="1"/>
</dbReference>
<dbReference type="PIRSF" id="PIRSF002096">
    <property type="entry name" value="HnS"/>
    <property type="match status" value="1"/>
</dbReference>
<dbReference type="SMART" id="SM00528">
    <property type="entry name" value="HNS"/>
    <property type="match status" value="1"/>
</dbReference>
<dbReference type="SUPFAM" id="SSF81273">
    <property type="entry name" value="H-NS histone-like proteins"/>
    <property type="match status" value="2"/>
</dbReference>
<evidence type="ECO:0000250" key="1"/>
<evidence type="ECO:0000250" key="2">
    <source>
        <dbReference type="UniProtKB" id="P0A1S2"/>
    </source>
</evidence>
<evidence type="ECO:0000250" key="3">
    <source>
        <dbReference type="UniProtKB" id="P0ACF8"/>
    </source>
</evidence>
<evidence type="ECO:0000305" key="4"/>
<reference key="1">
    <citation type="journal article" date="2002" name="Proc. Natl. Acad. Sci. U.S.A.">
        <title>Extensive mosaic structure revealed by the complete genome sequence of uropathogenic Escherichia coli.</title>
        <authorList>
            <person name="Welch R.A."/>
            <person name="Burland V."/>
            <person name="Plunkett G. III"/>
            <person name="Redford P."/>
            <person name="Roesch P."/>
            <person name="Rasko D."/>
            <person name="Buckles E.L."/>
            <person name="Liou S.-R."/>
            <person name="Boutin A."/>
            <person name="Hackett J."/>
            <person name="Stroud D."/>
            <person name="Mayhew G.F."/>
            <person name="Rose D.J."/>
            <person name="Zhou S."/>
            <person name="Schwartz D.C."/>
            <person name="Perna N.T."/>
            <person name="Mobley H.L.T."/>
            <person name="Donnenberg M.S."/>
            <person name="Blattner F.R."/>
        </authorList>
    </citation>
    <scope>NUCLEOTIDE SEQUENCE [LARGE SCALE GENOMIC DNA]</scope>
    <source>
        <strain>CFT073 / ATCC 700928 / UPEC</strain>
    </source>
</reference>
<feature type="initiator methionine" description="Removed" evidence="1">
    <location>
        <position position="1"/>
    </location>
</feature>
<feature type="chain" id="PRO_0000168505" description="DNA-binding protein H-NS">
    <location>
        <begin position="2"/>
        <end position="137"/>
    </location>
</feature>
<feature type="DNA-binding region" evidence="2">
    <location>
        <begin position="112"/>
        <end position="117"/>
    </location>
</feature>
<feature type="site" description="Interacts with Hha" evidence="1">
    <location>
        <position position="12"/>
    </location>
</feature>
<gene>
    <name type="primary">hns</name>
    <name type="ordered locus">c1701</name>
</gene>
<name>HNS_ECOL6</name>